<reference key="1">
    <citation type="journal article" date="2018" name="J. Am. Chem. Soc.">
        <title>Heterologous biosynthesis of nodulisporic acid F.</title>
        <authorList>
            <person name="Van de Bittner K.C."/>
            <person name="Nicholson M.J."/>
            <person name="Bustamante L.Y."/>
            <person name="Kessans S.A."/>
            <person name="Ram A."/>
            <person name="van Dolleweerd C.J."/>
            <person name="Scott B."/>
            <person name="Parker E.J."/>
        </authorList>
    </citation>
    <scope>NUCLEOTIDE SEQUENCE [GENOMIC DNA]</scope>
    <scope>IDENTIFICATION</scope>
    <scope>FUNCTION</scope>
    <scope>PATHWAY</scope>
    <source>
        <strain>MF5954 / ATCC 74245</strain>
    </source>
</reference>
<protein>
    <recommendedName>
        <fullName evidence="6">FAD-dependent monooxygenase nodY1</fullName>
        <ecNumber evidence="8">1.-.-.-</ecNumber>
    </recommendedName>
    <alternativeName>
        <fullName evidence="6">Nodulisporic acid biosynthesis cluster protein Y1</fullName>
    </alternativeName>
</protein>
<keyword id="KW-0274">FAD</keyword>
<keyword id="KW-0285">Flavoprotein</keyword>
<keyword id="KW-0503">Monooxygenase</keyword>
<keyword id="KW-0560">Oxidoreductase</keyword>
<keyword id="KW-0732">Signal</keyword>
<proteinExistence type="inferred from homology"/>
<sequence>MASTGVSVIVVGLGLAGLTTAIECHQKGHSVIALERSKDLNYVGKIIDDTVMIDNNAGVIVSKWGNGAVGQALNAWKFNNTQASVYDTTGKQVQTIEVRKPSSNKYLILRRELTKIVYDHAKTLGIDMRFGTEISDYWEESDQAGVSANGQKLQADCIIWADGVNSKGRDSVAGSSLKPTHSGYAHIRGRADIASLKGNPDAQWILQGAGEVDQMIFVPGPTACLTIVTCGGGRNVAFSNMYKVESPNSAKTSSTPATAQDFLKPIQSWPFKANIEAVVQAAPSGSLVDEPVLQLGQLPSWVSPQGRMILIGDASHPSALNSPIGESLVIEDAAVVAICLELAGKGNVPLALRVAEKIRYVKQSNNNKNIPRASALQHNVEQPDQGINMYPEVPLRDWVSEHNSQEHAYEEYDKVVKAIRGGKEYVATNIS</sequence>
<evidence type="ECO:0000250" key="1">
    <source>
        <dbReference type="UniProtKB" id="A6T923"/>
    </source>
</evidence>
<evidence type="ECO:0000250" key="2">
    <source>
        <dbReference type="UniProtKB" id="B8M9J8"/>
    </source>
</evidence>
<evidence type="ECO:0000250" key="3">
    <source>
        <dbReference type="UniProtKB" id="L0E4H0"/>
    </source>
</evidence>
<evidence type="ECO:0000255" key="4"/>
<evidence type="ECO:0000269" key="5">
    <source>
    </source>
</evidence>
<evidence type="ECO:0000303" key="6">
    <source>
    </source>
</evidence>
<evidence type="ECO:0000305" key="7"/>
<evidence type="ECO:0000305" key="8">
    <source>
    </source>
</evidence>
<accession>A0A2I6PJ01</accession>
<name>NODY1_HYPPI</name>
<feature type="signal peptide" evidence="4">
    <location>
        <begin position="1"/>
        <end position="21"/>
    </location>
</feature>
<feature type="chain" id="PRO_5014414883" description="FAD-dependent monooxygenase nodY1" evidence="4">
    <location>
        <begin position="22"/>
        <end position="431"/>
    </location>
</feature>
<feature type="active site" evidence="3">
    <location>
        <position position="188"/>
    </location>
</feature>
<feature type="binding site" evidence="2">
    <location>
        <position position="35"/>
    </location>
    <ligand>
        <name>FAD</name>
        <dbReference type="ChEBI" id="CHEBI:57692"/>
    </ligand>
</feature>
<feature type="binding site" evidence="2">
    <location>
        <position position="110"/>
    </location>
    <ligand>
        <name>FAD</name>
        <dbReference type="ChEBI" id="CHEBI:57692"/>
    </ligand>
</feature>
<feature type="binding site" evidence="2">
    <location>
        <position position="313"/>
    </location>
    <ligand>
        <name>FAD</name>
        <dbReference type="ChEBI" id="CHEBI:57692"/>
    </ligand>
</feature>
<comment type="function">
    <text evidence="5 8">FAD-dependent monooxygenase; part of the gene cluster that mediates the biosynthesis of the indole diterpenes nodulisporic acids (NA). Nodulisporic acid A (NAA) and its chemically modified derivatives are of particular significance because of their highly potent insecticidal activity against blood-feeding arthropods and lack of observable adverse effects on mammals, in particular the tremogenicity associated with the paspaline-derived IDTs is not observed (PubMed:29283570). The geranylgeranyl diphosphate (GGPP) synthase ggs1, localized outside of the cluster, is proposed to catalyze the first step in nodulisporic acid biosynthesis via conversion of farnesyl pyrophosphate and isopentyl pyrophosphate into geranylgeranyl pyrophosphate (GGPP) (PubMed:29283570). Condensation of indole-3-glycerol phosphate with GGPP by the prenyl transferase nodC then forms 3-geranylgeranylindole (3-GGI) (PubMed:29283570). Epoxidation by the FAD-dependent monooxygenase nodM leads to a single-epoxidized-GGI that is substrate of the terpene cyclase nodB for cyclization to yield emindole SB (PubMed:29283570). The terminal methyl carbon, C28, of emindole SB is then oxidized by the cytochrome P450 monooxygenase nodW to produce nodulisporic acid F (NAF), the pentacyclic core of NAA (PubMed:29283570). NAF is converted to nodulisporic acid E (NAE) via prenylation. This step is probably performed by one of the indole diterpene prenyltransferases nodD1 or nodD2 (Probable). Several oxidation steps performed by the FAD-linked oxidoreductase nodO and one of the cytochrome P450 monooxygenase nodR, nodX or nodZ further convert NAE to nodulisporic acid D (NAD) (Probable). NAD is substrate of cytochrome P450 monooxygenase nodJ to produce the precursor of nodulisporic acid C (NAC), converted to NAC by one of the indole diterpene prenyltransferases nodD1 or nodD2 (Probable). The FAD-dependent monooxygenase nodY2 then oxidizes NAC to nodulisporic acid B (NAB) (Probable). Finally NAB is converted to NAA by one of the cytochrome P450 monooxygenases nodR, nodX or nodZ (Probable).</text>
</comment>
<comment type="cofactor">
    <cofactor evidence="1">
        <name>FAD</name>
        <dbReference type="ChEBI" id="CHEBI:57692"/>
    </cofactor>
</comment>
<comment type="pathway">
    <text evidence="8">Secondary metabolite biosynthesis.</text>
</comment>
<comment type="similarity">
    <text evidence="7">Belongs to the paxM FAD-dependent monooxygenase family.</text>
</comment>
<dbReference type="EC" id="1.-.-.-" evidence="8"/>
<dbReference type="EMBL" id="MG182145">
    <property type="protein sequence ID" value="AUM60054.1"/>
    <property type="molecule type" value="Genomic_DNA"/>
</dbReference>
<dbReference type="SMR" id="A0A2I6PJ01"/>
<dbReference type="GO" id="GO:0071949">
    <property type="term" value="F:FAD binding"/>
    <property type="evidence" value="ECO:0007669"/>
    <property type="project" value="InterPro"/>
</dbReference>
<dbReference type="GO" id="GO:0004497">
    <property type="term" value="F:monooxygenase activity"/>
    <property type="evidence" value="ECO:0007669"/>
    <property type="project" value="UniProtKB-KW"/>
</dbReference>
<dbReference type="Gene3D" id="3.50.50.60">
    <property type="entry name" value="FAD/NAD(P)-binding domain"/>
    <property type="match status" value="1"/>
</dbReference>
<dbReference type="InterPro" id="IPR002938">
    <property type="entry name" value="FAD-bd"/>
</dbReference>
<dbReference type="InterPro" id="IPR050493">
    <property type="entry name" value="FAD-dep_Monooxygenase_BioMet"/>
</dbReference>
<dbReference type="InterPro" id="IPR036188">
    <property type="entry name" value="FAD/NAD-bd_sf"/>
</dbReference>
<dbReference type="PANTHER" id="PTHR13789">
    <property type="entry name" value="MONOOXYGENASE"/>
    <property type="match status" value="1"/>
</dbReference>
<dbReference type="PANTHER" id="PTHR13789:SF236">
    <property type="entry name" value="MONOOXYGENASE, PUTATIVE (AFU_ORTHOLOGUE AFUA_6G12060)-RELATED"/>
    <property type="match status" value="1"/>
</dbReference>
<dbReference type="Pfam" id="PF01494">
    <property type="entry name" value="FAD_binding_3"/>
    <property type="match status" value="1"/>
</dbReference>
<dbReference type="PRINTS" id="PR00420">
    <property type="entry name" value="RNGMNOXGNASE"/>
</dbReference>
<dbReference type="SUPFAM" id="SSF51905">
    <property type="entry name" value="FAD/NAD(P)-binding domain"/>
    <property type="match status" value="1"/>
</dbReference>
<gene>
    <name evidence="6" type="primary">nodY1</name>
</gene>
<organism>
    <name type="scientific">Hypoxylon pulicicidum</name>
    <dbReference type="NCBI Taxonomy" id="1243767"/>
    <lineage>
        <taxon>Eukaryota</taxon>
        <taxon>Fungi</taxon>
        <taxon>Dikarya</taxon>
        <taxon>Ascomycota</taxon>
        <taxon>Pezizomycotina</taxon>
        <taxon>Sordariomycetes</taxon>
        <taxon>Xylariomycetidae</taxon>
        <taxon>Xylariales</taxon>
        <taxon>Hypoxylaceae</taxon>
        <taxon>Hypoxylon</taxon>
    </lineage>
</organism>